<name>MUG9_SCHPO</name>
<organism>
    <name type="scientific">Schizosaccharomyces pombe (strain 972 / ATCC 24843)</name>
    <name type="common">Fission yeast</name>
    <dbReference type="NCBI Taxonomy" id="284812"/>
    <lineage>
        <taxon>Eukaryota</taxon>
        <taxon>Fungi</taxon>
        <taxon>Dikarya</taxon>
        <taxon>Ascomycota</taxon>
        <taxon>Taphrinomycotina</taxon>
        <taxon>Schizosaccharomycetes</taxon>
        <taxon>Schizosaccharomycetales</taxon>
        <taxon>Schizosaccharomycetaceae</taxon>
        <taxon>Schizosaccharomyces</taxon>
    </lineage>
</organism>
<protein>
    <recommendedName>
        <fullName>Meiotically up-regulated gene 9 protein</fullName>
    </recommendedName>
</protein>
<gene>
    <name type="primary">mug9</name>
    <name type="ORF">SPCC70.09c</name>
</gene>
<dbReference type="EMBL" id="CU329672">
    <property type="protein sequence ID" value="CAA19359.1"/>
    <property type="molecule type" value="Genomic_DNA"/>
</dbReference>
<dbReference type="PIR" id="T41555">
    <property type="entry name" value="T41555"/>
</dbReference>
<dbReference type="RefSeq" id="NP_588544.1">
    <property type="nucleotide sequence ID" value="NM_001023531.1"/>
</dbReference>
<dbReference type="BioGRID" id="275908">
    <property type="interactions" value="2"/>
</dbReference>
<dbReference type="STRING" id="284812.O94243"/>
<dbReference type="iPTMnet" id="O94243"/>
<dbReference type="PaxDb" id="4896-SPCC70.09c.1"/>
<dbReference type="EnsemblFungi" id="SPCC70.09c.1">
    <property type="protein sequence ID" value="SPCC70.09c.1:pep"/>
    <property type="gene ID" value="SPCC70.09c"/>
</dbReference>
<dbReference type="GeneID" id="2539342"/>
<dbReference type="KEGG" id="spo:2539342"/>
<dbReference type="PomBase" id="SPCC70.09c">
    <property type="gene designation" value="mug9"/>
</dbReference>
<dbReference type="VEuPathDB" id="FungiDB:SPCC70.09c"/>
<dbReference type="HOGENOM" id="CLU_1267537_0_0_1"/>
<dbReference type="InParanoid" id="O94243"/>
<dbReference type="OMA" id="WNNVIDG"/>
<dbReference type="PRO" id="PR:O94243"/>
<dbReference type="Proteomes" id="UP000002485">
    <property type="component" value="Chromosome III"/>
</dbReference>
<dbReference type="GO" id="GO:0051321">
    <property type="term" value="P:meiotic cell cycle"/>
    <property type="evidence" value="ECO:0007669"/>
    <property type="project" value="UniProtKB-KW"/>
</dbReference>
<dbReference type="GO" id="GO:0090334">
    <property type="term" value="P:regulation of cell wall (1-&gt;3)-beta-D-glucan biosynthetic process"/>
    <property type="evidence" value="ECO:0000266"/>
    <property type="project" value="PomBase"/>
</dbReference>
<dbReference type="InterPro" id="IPR018809">
    <property type="entry name" value="DUF2406"/>
</dbReference>
<dbReference type="PANTHER" id="PTHR28186">
    <property type="entry name" value="MEIOTICALLY UP-REGULATED GENE 9 PROTEIN"/>
    <property type="match status" value="1"/>
</dbReference>
<dbReference type="PANTHER" id="PTHR28186:SF1">
    <property type="entry name" value="MEIOTICALLY UP-REGULATED GENE 9 PROTEIN"/>
    <property type="match status" value="1"/>
</dbReference>
<dbReference type="Pfam" id="PF10295">
    <property type="entry name" value="DUF2406"/>
    <property type="match status" value="1"/>
</dbReference>
<accession>O94243</accession>
<comment type="function">
    <text evidence="2">Has a role in meiosis.</text>
</comment>
<evidence type="ECO:0000256" key="1">
    <source>
        <dbReference type="SAM" id="MobiDB-lite"/>
    </source>
</evidence>
<evidence type="ECO:0000269" key="2">
    <source>
    </source>
</evidence>
<keyword id="KW-0469">Meiosis</keyword>
<keyword id="KW-1185">Reference proteome</keyword>
<feature type="chain" id="PRO_0000278486" description="Meiotically up-regulated gene 9 protein">
    <location>
        <begin position="1"/>
        <end position="208"/>
    </location>
</feature>
<feature type="region of interest" description="Disordered" evidence="1">
    <location>
        <begin position="77"/>
        <end position="114"/>
    </location>
</feature>
<sequence length="208" mass="23321">MRKQAGGPCEKLNFPLVELEPYARVNRETTKLNKAHVRRDYSGRSICQPDTNNPTRWKYERPLETIRAWQDVAEGKVPASNEKAARVSNLKTVPSLKRENKEVNANSKPPVKQQEVIESTVISKSQSPSVKQLKLTESTLLAPSSSLKPSVSLKKDISSNLLCAAASNGYFRRPAAMRAQTLVPITQPDSKKNELKQKFKHLVHHVLT</sequence>
<proteinExistence type="evidence at protein level"/>
<reference key="1">
    <citation type="journal article" date="2002" name="Nature">
        <title>The genome sequence of Schizosaccharomyces pombe.</title>
        <authorList>
            <person name="Wood V."/>
            <person name="Gwilliam R."/>
            <person name="Rajandream M.A."/>
            <person name="Lyne M.H."/>
            <person name="Lyne R."/>
            <person name="Stewart A."/>
            <person name="Sgouros J.G."/>
            <person name="Peat N."/>
            <person name="Hayles J."/>
            <person name="Baker S.G."/>
            <person name="Basham D."/>
            <person name="Bowman S."/>
            <person name="Brooks K."/>
            <person name="Brown D."/>
            <person name="Brown S."/>
            <person name="Chillingworth T."/>
            <person name="Churcher C.M."/>
            <person name="Collins M."/>
            <person name="Connor R."/>
            <person name="Cronin A."/>
            <person name="Davis P."/>
            <person name="Feltwell T."/>
            <person name="Fraser A."/>
            <person name="Gentles S."/>
            <person name="Goble A."/>
            <person name="Hamlin N."/>
            <person name="Harris D.E."/>
            <person name="Hidalgo J."/>
            <person name="Hodgson G."/>
            <person name="Holroyd S."/>
            <person name="Hornsby T."/>
            <person name="Howarth S."/>
            <person name="Huckle E.J."/>
            <person name="Hunt S."/>
            <person name="Jagels K."/>
            <person name="James K.D."/>
            <person name="Jones L."/>
            <person name="Jones M."/>
            <person name="Leather S."/>
            <person name="McDonald S."/>
            <person name="McLean J."/>
            <person name="Mooney P."/>
            <person name="Moule S."/>
            <person name="Mungall K.L."/>
            <person name="Murphy L.D."/>
            <person name="Niblett D."/>
            <person name="Odell C."/>
            <person name="Oliver K."/>
            <person name="O'Neil S."/>
            <person name="Pearson D."/>
            <person name="Quail M.A."/>
            <person name="Rabbinowitsch E."/>
            <person name="Rutherford K.M."/>
            <person name="Rutter S."/>
            <person name="Saunders D."/>
            <person name="Seeger K."/>
            <person name="Sharp S."/>
            <person name="Skelton J."/>
            <person name="Simmonds M.N."/>
            <person name="Squares R."/>
            <person name="Squares S."/>
            <person name="Stevens K."/>
            <person name="Taylor K."/>
            <person name="Taylor R.G."/>
            <person name="Tivey A."/>
            <person name="Walsh S.V."/>
            <person name="Warren T."/>
            <person name="Whitehead S."/>
            <person name="Woodward J.R."/>
            <person name="Volckaert G."/>
            <person name="Aert R."/>
            <person name="Robben J."/>
            <person name="Grymonprez B."/>
            <person name="Weltjens I."/>
            <person name="Vanstreels E."/>
            <person name="Rieger M."/>
            <person name="Schaefer M."/>
            <person name="Mueller-Auer S."/>
            <person name="Gabel C."/>
            <person name="Fuchs M."/>
            <person name="Duesterhoeft A."/>
            <person name="Fritzc C."/>
            <person name="Holzer E."/>
            <person name="Moestl D."/>
            <person name="Hilbert H."/>
            <person name="Borzym K."/>
            <person name="Langer I."/>
            <person name="Beck A."/>
            <person name="Lehrach H."/>
            <person name="Reinhardt R."/>
            <person name="Pohl T.M."/>
            <person name="Eger P."/>
            <person name="Zimmermann W."/>
            <person name="Wedler H."/>
            <person name="Wambutt R."/>
            <person name="Purnelle B."/>
            <person name="Goffeau A."/>
            <person name="Cadieu E."/>
            <person name="Dreano S."/>
            <person name="Gloux S."/>
            <person name="Lelaure V."/>
            <person name="Mottier S."/>
            <person name="Galibert F."/>
            <person name="Aves S.J."/>
            <person name="Xiang Z."/>
            <person name="Hunt C."/>
            <person name="Moore K."/>
            <person name="Hurst S.M."/>
            <person name="Lucas M."/>
            <person name="Rochet M."/>
            <person name="Gaillardin C."/>
            <person name="Tallada V.A."/>
            <person name="Garzon A."/>
            <person name="Thode G."/>
            <person name="Daga R.R."/>
            <person name="Cruzado L."/>
            <person name="Jimenez J."/>
            <person name="Sanchez M."/>
            <person name="del Rey F."/>
            <person name="Benito J."/>
            <person name="Dominguez A."/>
            <person name="Revuelta J.L."/>
            <person name="Moreno S."/>
            <person name="Armstrong J."/>
            <person name="Forsburg S.L."/>
            <person name="Cerutti L."/>
            <person name="Lowe T."/>
            <person name="McCombie W.R."/>
            <person name="Paulsen I."/>
            <person name="Potashkin J."/>
            <person name="Shpakovski G.V."/>
            <person name="Ussery D."/>
            <person name="Barrell B.G."/>
            <person name="Nurse P."/>
        </authorList>
    </citation>
    <scope>NUCLEOTIDE SEQUENCE [LARGE SCALE GENOMIC DNA]</scope>
    <source>
        <strain>972 / ATCC 24843</strain>
    </source>
</reference>
<reference key="2">
    <citation type="journal article" date="2005" name="Curr. Biol.">
        <title>A large-scale screen in S. pombe identifies seven novel genes required for critical meiotic events.</title>
        <authorList>
            <person name="Martin-Castellanos C."/>
            <person name="Blanco M."/>
            <person name="Rozalen A.E."/>
            <person name="Perez-Hidalgo L."/>
            <person name="Garcia A.I."/>
            <person name="Conde F."/>
            <person name="Mata J."/>
            <person name="Ellermeier C."/>
            <person name="Davis L."/>
            <person name="San-Segundo P."/>
            <person name="Smith G.R."/>
            <person name="Moreno S."/>
        </authorList>
    </citation>
    <scope>FUNCTION IN MEIOSIS</scope>
</reference>